<gene>
    <name evidence="1" type="primary">phnW</name>
    <name type="ordered locus">PFL_3965</name>
</gene>
<dbReference type="EC" id="2.6.1.37" evidence="1"/>
<dbReference type="EMBL" id="CP000076">
    <property type="protein sequence ID" value="AAY93229.1"/>
    <property type="molecule type" value="Genomic_DNA"/>
</dbReference>
<dbReference type="RefSeq" id="WP_011062252.1">
    <property type="nucleotide sequence ID" value="NC_004129.6"/>
</dbReference>
<dbReference type="SMR" id="Q4K9L8"/>
<dbReference type="STRING" id="220664.PFL_3965"/>
<dbReference type="KEGG" id="pfl:PFL_3965"/>
<dbReference type="PATRIC" id="fig|220664.5.peg.4062"/>
<dbReference type="eggNOG" id="COG0075">
    <property type="taxonomic scope" value="Bacteria"/>
</dbReference>
<dbReference type="HOGENOM" id="CLU_027686_3_1_6"/>
<dbReference type="Proteomes" id="UP000008540">
    <property type="component" value="Chromosome"/>
</dbReference>
<dbReference type="GO" id="GO:0047304">
    <property type="term" value="F:2-aminoethylphosphonate-pyruvate transaminase activity"/>
    <property type="evidence" value="ECO:0007669"/>
    <property type="project" value="UniProtKB-UniRule"/>
</dbReference>
<dbReference type="GO" id="GO:0019700">
    <property type="term" value="P:organic phosphonate catabolic process"/>
    <property type="evidence" value="ECO:0007669"/>
    <property type="project" value="InterPro"/>
</dbReference>
<dbReference type="Gene3D" id="3.90.1150.10">
    <property type="entry name" value="Aspartate Aminotransferase, domain 1"/>
    <property type="match status" value="1"/>
</dbReference>
<dbReference type="Gene3D" id="3.40.640.10">
    <property type="entry name" value="Type I PLP-dependent aspartate aminotransferase-like (Major domain)"/>
    <property type="match status" value="1"/>
</dbReference>
<dbReference type="HAMAP" id="MF_01376">
    <property type="entry name" value="PhnW_aminotrans_5"/>
    <property type="match status" value="1"/>
</dbReference>
<dbReference type="InterPro" id="IPR000192">
    <property type="entry name" value="Aminotrans_V_dom"/>
</dbReference>
<dbReference type="InterPro" id="IPR012703">
    <property type="entry name" value="NH2EtPonate_pyrv_transaminase"/>
</dbReference>
<dbReference type="InterPro" id="IPR015424">
    <property type="entry name" value="PyrdxlP-dep_Trfase"/>
</dbReference>
<dbReference type="InterPro" id="IPR015421">
    <property type="entry name" value="PyrdxlP-dep_Trfase_major"/>
</dbReference>
<dbReference type="InterPro" id="IPR015422">
    <property type="entry name" value="PyrdxlP-dep_Trfase_small"/>
</dbReference>
<dbReference type="InterPro" id="IPR024169">
    <property type="entry name" value="SP_NH2Trfase/AEP_transaminase"/>
</dbReference>
<dbReference type="NCBIfam" id="TIGR03301">
    <property type="entry name" value="PhnW-AepZ"/>
    <property type="match status" value="1"/>
</dbReference>
<dbReference type="NCBIfam" id="NF010006">
    <property type="entry name" value="PRK13479.1"/>
    <property type="match status" value="1"/>
</dbReference>
<dbReference type="NCBIfam" id="TIGR02326">
    <property type="entry name" value="transamin_PhnW"/>
    <property type="match status" value="1"/>
</dbReference>
<dbReference type="PANTHER" id="PTHR42778">
    <property type="entry name" value="2-AMINOETHYLPHOSPHONATE--PYRUVATE TRANSAMINASE"/>
    <property type="match status" value="1"/>
</dbReference>
<dbReference type="PANTHER" id="PTHR42778:SF1">
    <property type="entry name" value="2-AMINOETHYLPHOSPHONATE--PYRUVATE TRANSAMINASE"/>
    <property type="match status" value="1"/>
</dbReference>
<dbReference type="Pfam" id="PF00266">
    <property type="entry name" value="Aminotran_5"/>
    <property type="match status" value="1"/>
</dbReference>
<dbReference type="PIRSF" id="PIRSF000524">
    <property type="entry name" value="SPT"/>
    <property type="match status" value="1"/>
</dbReference>
<dbReference type="SUPFAM" id="SSF53383">
    <property type="entry name" value="PLP-dependent transferases"/>
    <property type="match status" value="1"/>
</dbReference>
<comment type="function">
    <text evidence="1">Involved in phosphonate degradation.</text>
</comment>
<comment type="catalytic activity">
    <reaction evidence="1">
        <text>(2-aminoethyl)phosphonate + pyruvate = phosphonoacetaldehyde + L-alanine</text>
        <dbReference type="Rhea" id="RHEA:17021"/>
        <dbReference type="ChEBI" id="CHEBI:15361"/>
        <dbReference type="ChEBI" id="CHEBI:57418"/>
        <dbReference type="ChEBI" id="CHEBI:57972"/>
        <dbReference type="ChEBI" id="CHEBI:58383"/>
        <dbReference type="EC" id="2.6.1.37"/>
    </reaction>
</comment>
<comment type="cofactor">
    <cofactor evidence="1">
        <name>pyridoxal 5'-phosphate</name>
        <dbReference type="ChEBI" id="CHEBI:597326"/>
    </cofactor>
</comment>
<comment type="subunit">
    <text evidence="1">Homodimer.</text>
</comment>
<comment type="similarity">
    <text evidence="1">Belongs to the class-V pyridoxal-phosphate-dependent aminotransferase family. PhnW subfamily.</text>
</comment>
<evidence type="ECO:0000255" key="1">
    <source>
        <dbReference type="HAMAP-Rule" id="MF_01376"/>
    </source>
</evidence>
<accession>Q4K9L8</accession>
<reference key="1">
    <citation type="journal article" date="2005" name="Nat. Biotechnol.">
        <title>Complete genome sequence of the plant commensal Pseudomonas fluorescens Pf-5.</title>
        <authorList>
            <person name="Paulsen I.T."/>
            <person name="Press C.M."/>
            <person name="Ravel J."/>
            <person name="Kobayashi D.Y."/>
            <person name="Myers G.S.A."/>
            <person name="Mavrodi D.V."/>
            <person name="DeBoy R.T."/>
            <person name="Seshadri R."/>
            <person name="Ren Q."/>
            <person name="Madupu R."/>
            <person name="Dodson R.J."/>
            <person name="Durkin A.S."/>
            <person name="Brinkac L.M."/>
            <person name="Daugherty S.C."/>
            <person name="Sullivan S.A."/>
            <person name="Rosovitz M.J."/>
            <person name="Gwinn M.L."/>
            <person name="Zhou L."/>
            <person name="Schneider D.J."/>
            <person name="Cartinhour S.W."/>
            <person name="Nelson W.C."/>
            <person name="Weidman J."/>
            <person name="Watkins K."/>
            <person name="Tran K."/>
            <person name="Khouri H."/>
            <person name="Pierson E.A."/>
            <person name="Pierson L.S. III"/>
            <person name="Thomashow L.S."/>
            <person name="Loper J.E."/>
        </authorList>
    </citation>
    <scope>NUCLEOTIDE SEQUENCE [LARGE SCALE GENOMIC DNA]</scope>
    <source>
        <strain>ATCC BAA-477 / NRRL B-23932 / Pf-5</strain>
    </source>
</reference>
<sequence length="369" mass="39792">MSIAEPILLTPGPLTTSARTRQAMLVDWGSWDDRFNQLTASLCQQLLAIIQGADSHHCVPLQGSGTFAVEAAIGTLVPRDGKVLVLINGAYGKRLAKICEVLGRDFSTFETAEDQPTTAADVERLLQADSSISHVALIHCETSTGILNPLPEIAQVVASHGKRLIIDAMSSFGALPIDAREIPFDALIAASGKCLEGVPGMGFVFAAKASLAQAGGNAHSLAMDLHDQHSYMAKTGQWRFTPPTHVVAALHEALLQYAEEGGLPARHARYADNCQTLLDGMGELGLRSFLPEAIQAPIIVTFHAPKDPRYQFKDFYERVKAKGFILYPGKLTQVETFRVGCIGHVDRRGMQAAVAAIAEVLQEMEVLDI</sequence>
<keyword id="KW-0032">Aminotransferase</keyword>
<keyword id="KW-0663">Pyridoxal phosphate</keyword>
<keyword id="KW-0670">Pyruvate</keyword>
<keyword id="KW-0808">Transferase</keyword>
<name>PHNW_PSEF5</name>
<organism>
    <name type="scientific">Pseudomonas fluorescens (strain ATCC BAA-477 / NRRL B-23932 / Pf-5)</name>
    <dbReference type="NCBI Taxonomy" id="220664"/>
    <lineage>
        <taxon>Bacteria</taxon>
        <taxon>Pseudomonadati</taxon>
        <taxon>Pseudomonadota</taxon>
        <taxon>Gammaproteobacteria</taxon>
        <taxon>Pseudomonadales</taxon>
        <taxon>Pseudomonadaceae</taxon>
        <taxon>Pseudomonas</taxon>
    </lineage>
</organism>
<feature type="chain" id="PRO_0000286776" description="2-aminoethylphosphonate--pyruvate transaminase">
    <location>
        <begin position="1"/>
        <end position="369"/>
    </location>
</feature>
<feature type="modified residue" description="N6-(pyridoxal phosphate)lysine" evidence="1">
    <location>
        <position position="193"/>
    </location>
</feature>
<proteinExistence type="inferred from homology"/>
<protein>
    <recommendedName>
        <fullName evidence="1">2-aminoethylphosphonate--pyruvate transaminase</fullName>
        <ecNumber evidence="1">2.6.1.37</ecNumber>
    </recommendedName>
    <alternativeName>
        <fullName evidence="1">2-aminoethylphosphonate aminotransferase</fullName>
    </alternativeName>
    <alternativeName>
        <fullName evidence="1">AEP transaminase</fullName>
        <shortName evidence="1">AEPT</shortName>
    </alternativeName>
</protein>